<keyword id="KW-1185">Reference proteome</keyword>
<keyword id="KW-0687">Ribonucleoprotein</keyword>
<keyword id="KW-0689">Ribosomal protein</keyword>
<keyword id="KW-0694">RNA-binding</keyword>
<keyword id="KW-0699">rRNA-binding</keyword>
<proteinExistence type="inferred from homology"/>
<organism>
    <name type="scientific">Nitrosopumilus maritimus (strain SCM1)</name>
    <dbReference type="NCBI Taxonomy" id="436308"/>
    <lineage>
        <taxon>Archaea</taxon>
        <taxon>Nitrososphaerota</taxon>
        <taxon>Nitrososphaeria</taxon>
        <taxon>Nitrosopumilales</taxon>
        <taxon>Nitrosopumilaceae</taxon>
        <taxon>Nitrosopumilus</taxon>
    </lineage>
</organism>
<dbReference type="EMBL" id="CP000866">
    <property type="protein sequence ID" value="ABX12701.1"/>
    <property type="molecule type" value="Genomic_DNA"/>
</dbReference>
<dbReference type="RefSeq" id="WP_012215188.1">
    <property type="nucleotide sequence ID" value="NC_010085.1"/>
</dbReference>
<dbReference type="SMR" id="A9A5J0"/>
<dbReference type="FunCoup" id="A9A5J0">
    <property type="interactions" value="171"/>
</dbReference>
<dbReference type="STRING" id="436308.Nmar_0805"/>
<dbReference type="EnsemblBacteria" id="ABX12701">
    <property type="protein sequence ID" value="ABX12701"/>
    <property type="gene ID" value="Nmar_0805"/>
</dbReference>
<dbReference type="GeneID" id="5773835"/>
<dbReference type="KEGG" id="nmr:Nmar_0805"/>
<dbReference type="eggNOG" id="arCOG04098">
    <property type="taxonomic scope" value="Archaea"/>
</dbReference>
<dbReference type="HOGENOM" id="CLU_083987_0_2_2"/>
<dbReference type="InParanoid" id="A9A5J0"/>
<dbReference type="OrthoDB" id="314984at2157"/>
<dbReference type="PhylomeDB" id="A9A5J0"/>
<dbReference type="Proteomes" id="UP000000792">
    <property type="component" value="Chromosome"/>
</dbReference>
<dbReference type="GO" id="GO:0022625">
    <property type="term" value="C:cytosolic large ribosomal subunit"/>
    <property type="evidence" value="ECO:0000318"/>
    <property type="project" value="GO_Central"/>
</dbReference>
<dbReference type="GO" id="GO:0019843">
    <property type="term" value="F:rRNA binding"/>
    <property type="evidence" value="ECO:0007669"/>
    <property type="project" value="UniProtKB-UniRule"/>
</dbReference>
<dbReference type="GO" id="GO:0003735">
    <property type="term" value="F:structural constituent of ribosome"/>
    <property type="evidence" value="ECO:0000318"/>
    <property type="project" value="GO_Central"/>
</dbReference>
<dbReference type="GO" id="GO:0002181">
    <property type="term" value="P:cytoplasmic translation"/>
    <property type="evidence" value="ECO:0000318"/>
    <property type="project" value="GO_Central"/>
</dbReference>
<dbReference type="CDD" id="cd00336">
    <property type="entry name" value="Ribosomal_L22"/>
    <property type="match status" value="1"/>
</dbReference>
<dbReference type="FunFam" id="3.90.470.10:FF:000015">
    <property type="entry name" value="50S ribosomal protein L22"/>
    <property type="match status" value="1"/>
</dbReference>
<dbReference type="Gene3D" id="3.90.470.10">
    <property type="entry name" value="Ribosomal protein L22/L17"/>
    <property type="match status" value="1"/>
</dbReference>
<dbReference type="HAMAP" id="MF_01331_A">
    <property type="entry name" value="Ribosomal_uL22_A"/>
    <property type="match status" value="1"/>
</dbReference>
<dbReference type="InterPro" id="IPR001063">
    <property type="entry name" value="Ribosomal_uL22"/>
</dbReference>
<dbReference type="InterPro" id="IPR005721">
    <property type="entry name" value="Ribosomal_uL22_euk/arc"/>
</dbReference>
<dbReference type="InterPro" id="IPR036394">
    <property type="entry name" value="Ribosomal_uL22_sf"/>
</dbReference>
<dbReference type="NCBIfam" id="NF003260">
    <property type="entry name" value="PRK04223.1"/>
    <property type="match status" value="1"/>
</dbReference>
<dbReference type="NCBIfam" id="TIGR01038">
    <property type="entry name" value="uL22_arch_euk"/>
    <property type="match status" value="1"/>
</dbReference>
<dbReference type="PANTHER" id="PTHR11593">
    <property type="entry name" value="60S RIBOSOMAL PROTEIN L17"/>
    <property type="match status" value="1"/>
</dbReference>
<dbReference type="PANTHER" id="PTHR11593:SF10">
    <property type="entry name" value="60S RIBOSOMAL PROTEIN L17"/>
    <property type="match status" value="1"/>
</dbReference>
<dbReference type="Pfam" id="PF00237">
    <property type="entry name" value="Ribosomal_L22"/>
    <property type="match status" value="1"/>
</dbReference>
<dbReference type="SUPFAM" id="SSF54843">
    <property type="entry name" value="Ribosomal protein L22"/>
    <property type="match status" value="1"/>
</dbReference>
<name>RL22_NITMS</name>
<accession>A9A5J0</accession>
<gene>
    <name evidence="1" type="primary">rpl22</name>
    <name type="ordered locus">Nmar_0805</name>
</gene>
<protein>
    <recommendedName>
        <fullName evidence="1">Large ribosomal subunit protein uL22</fullName>
    </recommendedName>
    <alternativeName>
        <fullName evidence="2">50S ribosomal protein L22</fullName>
    </alternativeName>
</protein>
<feature type="chain" id="PRO_0000354545" description="Large ribosomal subunit protein uL22">
    <location>
        <begin position="1"/>
        <end position="152"/>
    </location>
</feature>
<reference key="1">
    <citation type="journal article" date="2010" name="Proc. Natl. Acad. Sci. U.S.A.">
        <title>Nitrosopumilus maritimus genome reveals unique mechanisms for nitrification and autotrophy in globally distributed marine crenarchaea.</title>
        <authorList>
            <person name="Walker C.B."/>
            <person name="de la Torre J.R."/>
            <person name="Klotz M.G."/>
            <person name="Urakawa H."/>
            <person name="Pinel N."/>
            <person name="Arp D.J."/>
            <person name="Brochier-Armanet C."/>
            <person name="Chain P.S."/>
            <person name="Chan P.P."/>
            <person name="Gollabgir A."/>
            <person name="Hemp J."/>
            <person name="Hugler M."/>
            <person name="Karr E.A."/>
            <person name="Konneke M."/>
            <person name="Shin M."/>
            <person name="Lawton T.J."/>
            <person name="Lowe T."/>
            <person name="Martens-Habbena W."/>
            <person name="Sayavedra-Soto L.A."/>
            <person name="Lang D."/>
            <person name="Sievert S.M."/>
            <person name="Rosenzweig A.C."/>
            <person name="Manning G."/>
            <person name="Stahl D.A."/>
        </authorList>
    </citation>
    <scope>NUCLEOTIDE SEQUENCE [LARGE SCALE GENOMIC DNA]</scope>
    <source>
        <strain>SCM1</strain>
    </source>
</reference>
<evidence type="ECO:0000255" key="1">
    <source>
        <dbReference type="HAMAP-Rule" id="MF_01331"/>
    </source>
</evidence>
<evidence type="ECO:0000305" key="2"/>
<sequence length="152" mass="17338">MGRFGYAFQNYDATRHVRSSVREKDMSHKHAREVAVAIKGLSIEKARDYLQAVVNKDRAVAFRRYKNQVGHKADPGMMSGRYPQKTAREFIKVLDNLESNAEYKGMDLDRLKIVNATVHKGVIVKRFIPRAMGRATPKNNVLTHVELVAQEI</sequence>
<comment type="function">
    <text evidence="1">This protein binds specifically to 23S rRNA. It makes multiple contacts with different domains of the 23S rRNA in the assembled 50S subunit and ribosome.</text>
</comment>
<comment type="function">
    <text evidence="1">The globular domain of the protein is located near the polypeptide exit tunnel on the outside of the subunit, while an extended beta-hairpin is found that lines the wall of the exit tunnel in the center of the 70S ribosome.</text>
</comment>
<comment type="subunit">
    <text evidence="1">Part of the 50S ribosomal subunit.</text>
</comment>
<comment type="similarity">
    <text evidence="1">Belongs to the universal ribosomal protein uL22 family.</text>
</comment>